<keyword id="KW-0244">Early protein</keyword>
<keyword id="KW-1262">Eukaryotic host gene expression shutoff by virus</keyword>
<keyword id="KW-1191">Eukaryotic host transcription shutoff by virus</keyword>
<keyword id="KW-1035">Host cytoplasm</keyword>
<keyword id="KW-1190">Host gene expression shutoff by virus</keyword>
<keyword id="KW-1048">Host nucleus</keyword>
<keyword id="KW-0945">Host-virus interaction</keyword>
<keyword id="KW-1111">Inhibition of eukaryotic host transcription initiation by virus</keyword>
<keyword id="KW-1104">Inhibition of host RNA polymerase II by virus</keyword>
<keyword id="KW-0804">Transcription</keyword>
<keyword id="KW-0805">Transcription regulation</keyword>
<keyword id="KW-0946">Virion</keyword>
<keyword id="KW-0920">Virion tegument</keyword>
<accession>Q77NN7</accession>
<comment type="function">
    <text evidence="1">Immediate early (EI) protein that functions as a transcriptional regulator of cellular and viral mRNAs mainly by interacting with several general transcription factors thereby disorganizing the preinitiation complex at certain promoters. May additionally help to regulate levels of histones in virus-infected cells by interacting with host ASF1. By inhibiting host transcriptional program, IE63 plays a major role in the ability of VZV to overcome the innate immune response to the virus (By similarity).</text>
</comment>
<comment type="subunit">
    <text>Interacts with IE62; this interaction modulates the function of IE62. Interacts with several components of host pre-initiation complex including GTF2E1, GTF2H2 and POLR2A; these interactions lead to repression of gene transcription. Interacts with host ASF1; altering its ability to bind histones.</text>
</comment>
<comment type="subcellular location">
    <subcellularLocation>
        <location>Host cytoplasm</location>
    </subcellularLocation>
    <subcellularLocation>
        <location>Host nucleus</location>
    </subcellularLocation>
    <subcellularLocation>
        <location>Virion tegument</location>
    </subcellularLocation>
    <text>During the first stage of infection, IE63 is mostly expressed in the nucleus and also slightly in the cytoplasm, and during latency, IE63 localizes in the cytoplasm quite exclusively.</text>
</comment>
<comment type="PTM">
    <text>Phosphorylated in vitro by host and by protein kinase ORF47.</text>
</comment>
<comment type="similarity">
    <text evidence="3">Belongs to the herpesviridae ICP22 family.</text>
</comment>
<evidence type="ECO:0000250" key="1"/>
<evidence type="ECO:0000256" key="2">
    <source>
        <dbReference type="SAM" id="MobiDB-lite"/>
    </source>
</evidence>
<evidence type="ECO:0000305" key="3"/>
<reference key="1">
    <citation type="journal article" date="2000" name="J. Infect. Dis.">
        <title>Nucleotide sequences that distinguish Oka vaccine from parental Oka and other varicella-zoster virus isolates.</title>
        <authorList>
            <person name="Argaw T."/>
            <person name="Cohen J.I."/>
            <person name="Klutch M."/>
            <person name="Lekstrom K."/>
            <person name="Yoshikawa T."/>
            <person name="Asano Y."/>
            <person name="Krause P.R."/>
        </authorList>
    </citation>
    <scope>NUCLEOTIDE SEQUENCE [LARGE SCALE GENOMIC DNA]</scope>
    <source>
        <strain>V-Oka(Biken)</strain>
    </source>
</reference>
<reference key="2">
    <citation type="journal article" date="2002" name="J. Virol.">
        <title>Comparison of the complete DNA sequences of the Oka varicella vaccine and its parental virus.</title>
        <authorList>
            <person name="Gomi Y."/>
            <person name="Sunamachi H."/>
            <person name="Mori Y."/>
            <person name="Nagaike K."/>
            <person name="Takahashi M."/>
            <person name="Yamanishi K."/>
        </authorList>
    </citation>
    <scope>NUCLEOTIDE SEQUENCE [LARGE SCALE GENOMIC DNA]</scope>
    <source>
        <strain>Isolate Human/Japan/P-Oka/1970</strain>
        <strain>Oka varicella vaccine Biken (V-Oka-Biken)</strain>
    </source>
</reference>
<reference key="3">
    <citation type="journal article" date="2008" name="J. Virol.">
        <title>Complete DNA sequences of two oka strain varicella-zoster virus genomes.</title>
        <authorList>
            <person name="Tillieux S.L."/>
            <person name="Halsey W.S."/>
            <person name="Thomas E.S."/>
            <person name="Voycik J.J."/>
            <person name="Sathe G.M."/>
            <person name="Vassilev V."/>
        </authorList>
    </citation>
    <scope>NUCLEOTIDE SEQUENCE [LARGE SCALE GENOMIC DNA]</scope>
    <source>
        <strain>Oka varicella vaccine VarilRix (V-Oka-GSK)</strain>
        <strain>Oka varicella vaccine Varivax (V-Oka-Merck)</strain>
    </source>
</reference>
<organismHost>
    <name type="scientific">Homo sapiens</name>
    <name type="common">Human</name>
    <dbReference type="NCBI Taxonomy" id="9606"/>
</organismHost>
<feature type="chain" id="PRO_0000385459" description="Transcriptional regulator ICP22 homolog">
    <location>
        <begin position="1"/>
        <end position="278"/>
    </location>
</feature>
<feature type="region of interest" description="IE62-binding" evidence="1">
    <location>
        <begin position="1"/>
        <end position="142"/>
    </location>
</feature>
<feature type="region of interest" description="Disordered" evidence="2">
    <location>
        <begin position="1"/>
        <end position="42"/>
    </location>
</feature>
<feature type="region of interest" description="Disordered" evidence="2">
    <location>
        <begin position="154"/>
        <end position="229"/>
    </location>
</feature>
<feature type="compositionally biased region" description="Acidic residues" evidence="2">
    <location>
        <begin position="155"/>
        <end position="169"/>
    </location>
</feature>
<feature type="compositionally biased region" description="Acidic residues" evidence="2">
    <location>
        <begin position="183"/>
        <end position="205"/>
    </location>
</feature>
<name>ICP22_VZVO</name>
<dbReference type="EMBL" id="AF206304">
    <property type="protein sequence ID" value="AAF61664.1"/>
    <property type="molecule type" value="Genomic_DNA"/>
</dbReference>
<dbReference type="EMBL" id="AB097932">
    <property type="status" value="NOT_ANNOTATED_CDS"/>
    <property type="molecule type" value="Genomic_DNA"/>
</dbReference>
<dbReference type="EMBL" id="AB097933">
    <property type="status" value="NOT_ANNOTATED_CDS"/>
    <property type="molecule type" value="Genomic_DNA"/>
</dbReference>
<dbReference type="EMBL" id="DQ008354">
    <property type="protein sequence ID" value="AAY57672.1"/>
    <property type="molecule type" value="Genomic_DNA"/>
</dbReference>
<dbReference type="EMBL" id="DQ008354">
    <property type="protein sequence ID" value="AAY57679.1"/>
    <property type="molecule type" value="Genomic_DNA"/>
</dbReference>
<dbReference type="EMBL" id="DQ008355">
    <property type="protein sequence ID" value="AAY57743.1"/>
    <property type="molecule type" value="Genomic_DNA"/>
</dbReference>
<dbReference type="EMBL" id="DQ008355">
    <property type="protein sequence ID" value="AAY57750.1"/>
    <property type="molecule type" value="Genomic_DNA"/>
</dbReference>
<dbReference type="RefSeq" id="NP_040185.1">
    <property type="nucleotide sequence ID" value="NC_001348.1"/>
</dbReference>
<dbReference type="RefSeq" id="NP_040192.1">
    <property type="nucleotide sequence ID" value="NC_001348.1"/>
</dbReference>
<dbReference type="BioGRID" id="971533">
    <property type="interactions" value="3"/>
</dbReference>
<dbReference type="GeneID" id="1487700"/>
<dbReference type="GeneID" id="1487711"/>
<dbReference type="KEGG" id="vg:1487700"/>
<dbReference type="KEGG" id="vg:1487711"/>
<dbReference type="Proteomes" id="UP000002603">
    <property type="component" value="Genome"/>
</dbReference>
<dbReference type="Proteomes" id="UP000008504">
    <property type="component" value="Genome"/>
</dbReference>
<dbReference type="Proteomes" id="UP000008505">
    <property type="component" value="Genome"/>
</dbReference>
<dbReference type="Proteomes" id="UP000008506">
    <property type="component" value="Genome"/>
</dbReference>
<dbReference type="GO" id="GO:0030430">
    <property type="term" value="C:host cell cytoplasm"/>
    <property type="evidence" value="ECO:0007669"/>
    <property type="project" value="UniProtKB-SubCell"/>
</dbReference>
<dbReference type="GO" id="GO:0042025">
    <property type="term" value="C:host cell nucleus"/>
    <property type="evidence" value="ECO:0007669"/>
    <property type="project" value="UniProtKB-SubCell"/>
</dbReference>
<dbReference type="GO" id="GO:0019033">
    <property type="term" value="C:viral tegument"/>
    <property type="evidence" value="ECO:0007669"/>
    <property type="project" value="UniProtKB-SubCell"/>
</dbReference>
<dbReference type="GO" id="GO:0010468">
    <property type="term" value="P:regulation of gene expression"/>
    <property type="evidence" value="ECO:0007669"/>
    <property type="project" value="InterPro"/>
</dbReference>
<dbReference type="GO" id="GO:0039657">
    <property type="term" value="P:symbiont-mediated suppression of host gene expression"/>
    <property type="evidence" value="ECO:0007669"/>
    <property type="project" value="UniProtKB-KW"/>
</dbReference>
<dbReference type="GO" id="GO:0039523">
    <property type="term" value="P:symbiont-mediated suppression of host mRNA transcription via inhibition of RNA polymerase II activity"/>
    <property type="evidence" value="ECO:0007669"/>
    <property type="project" value="UniProtKB-KW"/>
</dbReference>
<dbReference type="InterPro" id="IPR003403">
    <property type="entry name" value="IE68"/>
</dbReference>
<dbReference type="Pfam" id="PF02479">
    <property type="entry name" value="Herpes_IE68"/>
    <property type="match status" value="1"/>
</dbReference>
<sequence length="278" mass="30495">MFCTSPATRGDSSESKPGASVDVNGKMEYGSAPGPLNGRDTSRGPGAFCTPGWEIHPARLVEDINRVFLCIAQSSGRVTRDSRRLRRICLDFYLMGRTRQRPTLACWEELLQLQPTQTQCLRATLMEVSHRPPRGEDGFIEAPNVPLHRSALECDVSDDGGEDDSDDDGSTPSDVIEFRDSDAESSDGEDFIVEEESEESTDSCEPDGVPGDCYRDGDGCNTPSPKRPQRAIERYAGAETAEYTAAKALTALGEGGVDWKRRRHEAPRRHDIPPPHGV</sequence>
<organism>
    <name type="scientific">Varicella-zoster virus (strain Oka vaccine)</name>
    <name type="common">HHV-3</name>
    <name type="synonym">Human herpesvirus 3</name>
    <dbReference type="NCBI Taxonomy" id="341980"/>
    <lineage>
        <taxon>Viruses</taxon>
        <taxon>Duplodnaviria</taxon>
        <taxon>Heunggongvirae</taxon>
        <taxon>Peploviricota</taxon>
        <taxon>Herviviricetes</taxon>
        <taxon>Herpesvirales</taxon>
        <taxon>Orthoherpesviridae</taxon>
        <taxon>Alphaherpesvirinae</taxon>
        <taxon>Varicellovirus</taxon>
        <taxon>Varicellovirus humanalpha3</taxon>
        <taxon>Human herpesvirus 3</taxon>
    </lineage>
</organism>
<protein>
    <recommendedName>
        <fullName>Transcriptional regulator ICP22 homolog</fullName>
    </recommendedName>
    <alternativeName>
        <fullName>Immediate-early protein 63</fullName>
        <shortName>IE63</shortName>
    </alternativeName>
    <alternativeName>
        <fullName>Transcriptional transactivator IE63</fullName>
    </alternativeName>
</protein>
<proteinExistence type="inferred from homology"/>
<gene>
    <name type="ORF">ORF63</name>
</gene>
<gene>
    <name type="ORF">ORF70</name>
</gene>